<comment type="function">
    <text evidence="4">Embryo-specific aspartic protease that limits programmed cell death during reproductive development. Possesses peptidase activity toward casein in vitro.</text>
</comment>
<comment type="subcellular location">
    <subcellularLocation>
        <location>Endoplasmic reticulum</location>
    </subcellularLocation>
</comment>
<comment type="tissue specificity">
    <text evidence="4">Expressed specifically in developing gametophytes and developing seeds.</text>
</comment>
<comment type="disruption phenotype">
    <text evidence="4">Embryonic lethality when homozygous.</text>
</comment>
<comment type="miscellaneous">
    <text evidence="6">Ectopic expression of PCS1 induces survival of cells of the anther wall including stomium and septum cells. This leads to a failure in anther dehiscence and subsequent male sterility (PubMed:15723040).</text>
</comment>
<comment type="similarity">
    <text evidence="5">Belongs to the peptidase A1 family.</text>
</comment>
<gene>
    <name type="primary">PCS1</name>
    <name type="synonym">EMB24</name>
    <name type="ordered locus">At5g02190</name>
    <name type="ORF">T7H20.240</name>
</gene>
<organism>
    <name type="scientific">Arabidopsis thaliana</name>
    <name type="common">Mouse-ear cress</name>
    <dbReference type="NCBI Taxonomy" id="3702"/>
    <lineage>
        <taxon>Eukaryota</taxon>
        <taxon>Viridiplantae</taxon>
        <taxon>Streptophyta</taxon>
        <taxon>Embryophyta</taxon>
        <taxon>Tracheophyta</taxon>
        <taxon>Spermatophyta</taxon>
        <taxon>Magnoliopsida</taxon>
        <taxon>eudicotyledons</taxon>
        <taxon>Gunneridae</taxon>
        <taxon>Pentapetalae</taxon>
        <taxon>rosids</taxon>
        <taxon>malvids</taxon>
        <taxon>Brassicales</taxon>
        <taxon>Brassicaceae</taxon>
        <taxon>Camelineae</taxon>
        <taxon>Arabidopsis</taxon>
    </lineage>
</organism>
<feature type="signal peptide" evidence="1">
    <location>
        <begin position="1"/>
        <end position="18"/>
    </location>
</feature>
<feature type="propeptide" id="PRO_0000420631" description="Activation peptide" evidence="1">
    <location>
        <begin position="19"/>
        <end position="57"/>
    </location>
</feature>
<feature type="chain" id="PRO_0000420632" description="Aspartic proteinase PCS1">
    <location>
        <begin position="58"/>
        <end position="453"/>
    </location>
</feature>
<feature type="domain" description="Peptidase A1" evidence="2">
    <location>
        <begin position="73"/>
        <end position="438"/>
    </location>
</feature>
<feature type="active site" evidence="3">
    <location>
        <position position="91"/>
    </location>
</feature>
<feature type="active site" evidence="3">
    <location>
        <position position="304"/>
    </location>
</feature>
<feature type="glycosylation site" description="N-linked (GlcNAc...) asparagine" evidence="1">
    <location>
        <position position="70"/>
    </location>
</feature>
<feature type="glycosylation site" description="N-linked (GlcNAc...) asparagine" evidence="1">
    <location>
        <position position="85"/>
    </location>
</feature>
<feature type="glycosylation site" description="N-linked (GlcNAc...) asparagine" evidence="1">
    <location>
        <position position="102"/>
    </location>
</feature>
<feature type="glycosylation site" description="N-linked (GlcNAc...) asparagine" evidence="1">
    <location>
        <position position="175"/>
    </location>
</feature>
<feature type="glycosylation site" description="N-linked (GlcNAc...) asparagine" evidence="1">
    <location>
        <position position="178"/>
    </location>
</feature>
<feature type="glycosylation site" description="N-linked (GlcNAc...) asparagine" evidence="1">
    <location>
        <position position="243"/>
    </location>
</feature>
<feature type="glycosylation site" description="N-linked (GlcNAc...) asparagine" evidence="1">
    <location>
        <position position="326"/>
    </location>
</feature>
<feature type="glycosylation site" description="N-linked (GlcNAc...) asparagine" evidence="1">
    <location>
        <position position="395"/>
    </location>
</feature>
<proteinExistence type="evidence at transcript level"/>
<dbReference type="EC" id="3.4.23.-"/>
<dbReference type="EMBL" id="AL162508">
    <property type="protein sequence ID" value="CAB82992.1"/>
    <property type="molecule type" value="Genomic_DNA"/>
</dbReference>
<dbReference type="EMBL" id="CP002688">
    <property type="protein sequence ID" value="AED90442.1"/>
    <property type="molecule type" value="Genomic_DNA"/>
</dbReference>
<dbReference type="EMBL" id="BT015130">
    <property type="protein sequence ID" value="AAT85726.1"/>
    <property type="molecule type" value="mRNA"/>
</dbReference>
<dbReference type="EMBL" id="BT015855">
    <property type="protein sequence ID" value="AAU94418.1"/>
    <property type="molecule type" value="mRNA"/>
</dbReference>
<dbReference type="EMBL" id="AK226937">
    <property type="protein sequence ID" value="BAE99007.1"/>
    <property type="molecule type" value="mRNA"/>
</dbReference>
<dbReference type="PIR" id="T48240">
    <property type="entry name" value="T48240"/>
</dbReference>
<dbReference type="RefSeq" id="NP_195839.1">
    <property type="nucleotide sequence ID" value="NM_120297.4"/>
</dbReference>
<dbReference type="SMR" id="Q9LZL3"/>
<dbReference type="FunCoup" id="Q9LZL3">
    <property type="interactions" value="33"/>
</dbReference>
<dbReference type="STRING" id="3702.Q9LZL3"/>
<dbReference type="MEROPS" id="A01.074"/>
<dbReference type="GlyCosmos" id="Q9LZL3">
    <property type="glycosylation" value="8 sites, No reported glycans"/>
</dbReference>
<dbReference type="GlyGen" id="Q9LZL3">
    <property type="glycosylation" value="8 sites"/>
</dbReference>
<dbReference type="PaxDb" id="3702-AT5G02190.1"/>
<dbReference type="ProteomicsDB" id="236373"/>
<dbReference type="EnsemblPlants" id="AT5G02190.1">
    <property type="protein sequence ID" value="AT5G02190.1"/>
    <property type="gene ID" value="AT5G02190"/>
</dbReference>
<dbReference type="GeneID" id="831845"/>
<dbReference type="Gramene" id="AT5G02190.1">
    <property type="protein sequence ID" value="AT5G02190.1"/>
    <property type="gene ID" value="AT5G02190"/>
</dbReference>
<dbReference type="KEGG" id="ath:AT5G02190"/>
<dbReference type="Araport" id="AT5G02190"/>
<dbReference type="TAIR" id="AT5G02190">
    <property type="gene designation" value="PCS1"/>
</dbReference>
<dbReference type="eggNOG" id="KOG1339">
    <property type="taxonomic scope" value="Eukaryota"/>
</dbReference>
<dbReference type="HOGENOM" id="CLU_005738_8_4_1"/>
<dbReference type="InParanoid" id="Q9LZL3"/>
<dbReference type="OMA" id="WMEFDLQ"/>
<dbReference type="PhylomeDB" id="Q9LZL3"/>
<dbReference type="PRO" id="PR:Q9LZL3"/>
<dbReference type="Proteomes" id="UP000006548">
    <property type="component" value="Chromosome 5"/>
</dbReference>
<dbReference type="ExpressionAtlas" id="Q9LZL3">
    <property type="expression patterns" value="baseline and differential"/>
</dbReference>
<dbReference type="GO" id="GO:0005783">
    <property type="term" value="C:endoplasmic reticulum"/>
    <property type="evidence" value="ECO:0000314"/>
    <property type="project" value="TAIR"/>
</dbReference>
<dbReference type="GO" id="GO:0004190">
    <property type="term" value="F:aspartic-type endopeptidase activity"/>
    <property type="evidence" value="ECO:0000250"/>
    <property type="project" value="TAIR"/>
</dbReference>
<dbReference type="GO" id="GO:0008233">
    <property type="term" value="F:peptidase activity"/>
    <property type="evidence" value="ECO:0000314"/>
    <property type="project" value="TAIR"/>
</dbReference>
<dbReference type="GO" id="GO:0012501">
    <property type="term" value="P:programmed cell death"/>
    <property type="evidence" value="ECO:0000315"/>
    <property type="project" value="TAIR"/>
</dbReference>
<dbReference type="GO" id="GO:0006508">
    <property type="term" value="P:proteolysis"/>
    <property type="evidence" value="ECO:0007669"/>
    <property type="project" value="UniProtKB-KW"/>
</dbReference>
<dbReference type="CDD" id="cd05476">
    <property type="entry name" value="pepsin_A_like_plant"/>
    <property type="match status" value="1"/>
</dbReference>
<dbReference type="FunFam" id="2.40.70.10:FF:000046">
    <property type="entry name" value="Aspartic proteinase PCS1"/>
    <property type="match status" value="1"/>
</dbReference>
<dbReference type="FunFam" id="2.40.70.10:FF:000073">
    <property type="entry name" value="Aspartic proteinase PCS1"/>
    <property type="match status" value="1"/>
</dbReference>
<dbReference type="Gene3D" id="2.40.70.10">
    <property type="entry name" value="Acid Proteases"/>
    <property type="match status" value="2"/>
</dbReference>
<dbReference type="InterPro" id="IPR001461">
    <property type="entry name" value="Aspartic_peptidase_A1"/>
</dbReference>
<dbReference type="InterPro" id="IPR001969">
    <property type="entry name" value="Aspartic_peptidase_AS"/>
</dbReference>
<dbReference type="InterPro" id="IPR034161">
    <property type="entry name" value="Pepsin-like_plant"/>
</dbReference>
<dbReference type="InterPro" id="IPR033121">
    <property type="entry name" value="PEPTIDASE_A1"/>
</dbReference>
<dbReference type="InterPro" id="IPR021109">
    <property type="entry name" value="Peptidase_aspartic_dom_sf"/>
</dbReference>
<dbReference type="InterPro" id="IPR032799">
    <property type="entry name" value="TAXi_C"/>
</dbReference>
<dbReference type="InterPro" id="IPR032861">
    <property type="entry name" value="TAXi_N"/>
</dbReference>
<dbReference type="PANTHER" id="PTHR47965:SF77">
    <property type="entry name" value="ASPARTIC PROTEINASE PCS1"/>
    <property type="match status" value="1"/>
</dbReference>
<dbReference type="PANTHER" id="PTHR47965">
    <property type="entry name" value="ASPARTYL PROTEASE-RELATED"/>
    <property type="match status" value="1"/>
</dbReference>
<dbReference type="Pfam" id="PF14541">
    <property type="entry name" value="TAXi_C"/>
    <property type="match status" value="1"/>
</dbReference>
<dbReference type="Pfam" id="PF14543">
    <property type="entry name" value="TAXi_N"/>
    <property type="match status" value="1"/>
</dbReference>
<dbReference type="SUPFAM" id="SSF50630">
    <property type="entry name" value="Acid proteases"/>
    <property type="match status" value="1"/>
</dbReference>
<dbReference type="PROSITE" id="PS00141">
    <property type="entry name" value="ASP_PROTEASE"/>
    <property type="match status" value="1"/>
</dbReference>
<dbReference type="PROSITE" id="PS51767">
    <property type="entry name" value="PEPTIDASE_A1"/>
    <property type="match status" value="1"/>
</dbReference>
<sequence>MFSRFHALFLLLVLSVRTYKCVSSSSSSSSSFSFSSFSSSSSSQTLVLPLKTRITPTDHRPTDKLHFHHNVTLTVTLTVGTPPQNISMVIDTGSELSWLRCNRSSNPNPVNNFDPTRSSSYSPIPCSSPTCRTRTRDFLIPASCDSDKLCHATLSYADASSSEGNLAAEIFHFGNSTNDSNLIFGCMGSVSGSDPEEDTKTTGLLGMNRGSLSFISQMGFPKFSYCISGTDDFPGFLLLGDSNFTWLTPLNYTPLIRISTPLPYFDRVAYTVQLTGIKVNGKLLPIPKSVLVPDHTGAGQTMVDSGTQFTFLLGPVYTALRSHFLNRTNGILTVYEDPDFVFQGTMDLCYRISPVRIRSGILHRLPTVSLVFEGAEIAVSGQPLLYRVPHLTVGNDSVYCFTFGNSDLMGMEAYVIGHHHQQNMWIEFDLQRSRIGLAPVECDVSGQRLGIGS</sequence>
<protein>
    <recommendedName>
        <fullName>Aspartic proteinase PCS1</fullName>
        <ecNumber>3.4.23.-</ecNumber>
    </recommendedName>
    <alternativeName>
        <fullName>Aspartic protease 38</fullName>
        <shortName>AtASP38</shortName>
    </alternativeName>
    <alternativeName>
        <fullName>Protein EMBRYO DEFECTIVE 24</fullName>
    </alternativeName>
    <alternativeName>
        <fullName>Protein PROMOTION OF CELL SURVIVAL 1</fullName>
    </alternativeName>
</protein>
<accession>Q9LZL3</accession>
<keyword id="KW-0064">Aspartyl protease</keyword>
<keyword id="KW-0256">Endoplasmic reticulum</keyword>
<keyword id="KW-0325">Glycoprotein</keyword>
<keyword id="KW-0378">Hydrolase</keyword>
<keyword id="KW-0645">Protease</keyword>
<keyword id="KW-1185">Reference proteome</keyword>
<keyword id="KW-0732">Signal</keyword>
<keyword id="KW-0865">Zymogen</keyword>
<name>PCS1L_ARATH</name>
<evidence type="ECO:0000255" key="1"/>
<evidence type="ECO:0000255" key="2">
    <source>
        <dbReference type="PROSITE-ProRule" id="PRU01103"/>
    </source>
</evidence>
<evidence type="ECO:0000255" key="3">
    <source>
        <dbReference type="PROSITE-ProRule" id="PRU10094"/>
    </source>
</evidence>
<evidence type="ECO:0000269" key="4">
    <source>
    </source>
</evidence>
<evidence type="ECO:0000305" key="5"/>
<evidence type="ECO:0000305" key="6">
    <source>
    </source>
</evidence>
<reference key="1">
    <citation type="journal article" date="2000" name="Nature">
        <title>Sequence and analysis of chromosome 5 of the plant Arabidopsis thaliana.</title>
        <authorList>
            <person name="Tabata S."/>
            <person name="Kaneko T."/>
            <person name="Nakamura Y."/>
            <person name="Kotani H."/>
            <person name="Kato T."/>
            <person name="Asamizu E."/>
            <person name="Miyajima N."/>
            <person name="Sasamoto S."/>
            <person name="Kimura T."/>
            <person name="Hosouchi T."/>
            <person name="Kawashima K."/>
            <person name="Kohara M."/>
            <person name="Matsumoto M."/>
            <person name="Matsuno A."/>
            <person name="Muraki A."/>
            <person name="Nakayama S."/>
            <person name="Nakazaki N."/>
            <person name="Naruo K."/>
            <person name="Okumura S."/>
            <person name="Shinpo S."/>
            <person name="Takeuchi C."/>
            <person name="Wada T."/>
            <person name="Watanabe A."/>
            <person name="Yamada M."/>
            <person name="Yasuda M."/>
            <person name="Sato S."/>
            <person name="de la Bastide M."/>
            <person name="Huang E."/>
            <person name="Spiegel L."/>
            <person name="Gnoj L."/>
            <person name="O'Shaughnessy A."/>
            <person name="Preston R."/>
            <person name="Habermann K."/>
            <person name="Murray J."/>
            <person name="Johnson D."/>
            <person name="Rohlfing T."/>
            <person name="Nelson J."/>
            <person name="Stoneking T."/>
            <person name="Pepin K."/>
            <person name="Spieth J."/>
            <person name="Sekhon M."/>
            <person name="Armstrong J."/>
            <person name="Becker M."/>
            <person name="Belter E."/>
            <person name="Cordum H."/>
            <person name="Cordes M."/>
            <person name="Courtney L."/>
            <person name="Courtney W."/>
            <person name="Dante M."/>
            <person name="Du H."/>
            <person name="Edwards J."/>
            <person name="Fryman J."/>
            <person name="Haakensen B."/>
            <person name="Lamar E."/>
            <person name="Latreille P."/>
            <person name="Leonard S."/>
            <person name="Meyer R."/>
            <person name="Mulvaney E."/>
            <person name="Ozersky P."/>
            <person name="Riley A."/>
            <person name="Strowmatt C."/>
            <person name="Wagner-McPherson C."/>
            <person name="Wollam A."/>
            <person name="Yoakum M."/>
            <person name="Bell M."/>
            <person name="Dedhia N."/>
            <person name="Parnell L."/>
            <person name="Shah R."/>
            <person name="Rodriguez M."/>
            <person name="Hoon See L."/>
            <person name="Vil D."/>
            <person name="Baker J."/>
            <person name="Kirchoff K."/>
            <person name="Toth K."/>
            <person name="King L."/>
            <person name="Bahret A."/>
            <person name="Miller B."/>
            <person name="Marra M.A."/>
            <person name="Martienssen R."/>
            <person name="McCombie W.R."/>
            <person name="Wilson R.K."/>
            <person name="Murphy G."/>
            <person name="Bancroft I."/>
            <person name="Volckaert G."/>
            <person name="Wambutt R."/>
            <person name="Duesterhoeft A."/>
            <person name="Stiekema W."/>
            <person name="Pohl T."/>
            <person name="Entian K.-D."/>
            <person name="Terryn N."/>
            <person name="Hartley N."/>
            <person name="Bent E."/>
            <person name="Johnson S."/>
            <person name="Langham S.-A."/>
            <person name="McCullagh B."/>
            <person name="Robben J."/>
            <person name="Grymonprez B."/>
            <person name="Zimmermann W."/>
            <person name="Ramsperger U."/>
            <person name="Wedler H."/>
            <person name="Balke K."/>
            <person name="Wedler E."/>
            <person name="Peters S."/>
            <person name="van Staveren M."/>
            <person name="Dirkse W."/>
            <person name="Mooijman P."/>
            <person name="Klein Lankhorst R."/>
            <person name="Weitzenegger T."/>
            <person name="Bothe G."/>
            <person name="Rose M."/>
            <person name="Hauf J."/>
            <person name="Berneiser S."/>
            <person name="Hempel S."/>
            <person name="Feldpausch M."/>
            <person name="Lamberth S."/>
            <person name="Villarroel R."/>
            <person name="Gielen J."/>
            <person name="Ardiles W."/>
            <person name="Bents O."/>
            <person name="Lemcke K."/>
            <person name="Kolesov G."/>
            <person name="Mayer K.F.X."/>
            <person name="Rudd S."/>
            <person name="Schoof H."/>
            <person name="Schueller C."/>
            <person name="Zaccaria P."/>
            <person name="Mewes H.-W."/>
            <person name="Bevan M."/>
            <person name="Fransz P.F."/>
        </authorList>
    </citation>
    <scope>NUCLEOTIDE SEQUENCE [LARGE SCALE GENOMIC DNA]</scope>
    <source>
        <strain>cv. Columbia</strain>
    </source>
</reference>
<reference key="2">
    <citation type="journal article" date="2017" name="Plant J.">
        <title>Araport11: a complete reannotation of the Arabidopsis thaliana reference genome.</title>
        <authorList>
            <person name="Cheng C.Y."/>
            <person name="Krishnakumar V."/>
            <person name="Chan A.P."/>
            <person name="Thibaud-Nissen F."/>
            <person name="Schobel S."/>
            <person name="Town C.D."/>
        </authorList>
    </citation>
    <scope>GENOME REANNOTATION</scope>
    <source>
        <strain>cv. Columbia</strain>
    </source>
</reference>
<reference key="3">
    <citation type="submission" date="2004-10" db="EMBL/GenBank/DDBJ databases">
        <title>Arabidopsis ORF clones.</title>
        <authorList>
            <person name="Kim C.J."/>
            <person name="Chen H."/>
            <person name="Cheuk R.F."/>
            <person name="Shinn P."/>
            <person name="Ecker J.R."/>
        </authorList>
    </citation>
    <scope>NUCLEOTIDE SEQUENCE [LARGE SCALE MRNA]</scope>
    <source>
        <strain>cv. Columbia</strain>
    </source>
</reference>
<reference key="4">
    <citation type="submission" date="2006-07" db="EMBL/GenBank/DDBJ databases">
        <title>Large-scale analysis of RIKEN Arabidopsis full-length (RAFL) cDNAs.</title>
        <authorList>
            <person name="Totoki Y."/>
            <person name="Seki M."/>
            <person name="Ishida J."/>
            <person name="Nakajima M."/>
            <person name="Enju A."/>
            <person name="Kamiya A."/>
            <person name="Narusaka M."/>
            <person name="Shin-i T."/>
            <person name="Nakagawa M."/>
            <person name="Sakamoto N."/>
            <person name="Oishi K."/>
            <person name="Kohara Y."/>
            <person name="Kobayashi M."/>
            <person name="Toyoda A."/>
            <person name="Sakaki Y."/>
            <person name="Sakurai T."/>
            <person name="Iida K."/>
            <person name="Akiyama K."/>
            <person name="Satou M."/>
            <person name="Toyoda T."/>
            <person name="Konagaya A."/>
            <person name="Carninci P."/>
            <person name="Kawai J."/>
            <person name="Hayashizaki Y."/>
            <person name="Shinozaki K."/>
        </authorList>
    </citation>
    <scope>NUCLEOTIDE SEQUENCE [LARGE SCALE MRNA]</scope>
    <source>
        <strain>cv. Columbia</strain>
    </source>
</reference>
<reference key="5">
    <citation type="journal article" date="2005" name="EMBO Rep.">
        <title>An Arabidopsis aspartic protease functions as an anti-cell-death component in reproduction and embryogenesis.</title>
        <authorList>
            <person name="Ge X."/>
            <person name="Dietrich C."/>
            <person name="Matsuno M."/>
            <person name="Li G."/>
            <person name="Berg H."/>
            <person name="Xia Y."/>
        </authorList>
    </citation>
    <scope>FUNCTION</scope>
    <scope>TISSUE SPECIFICITY</scope>
    <scope>DISRUPTION PHENOTYPE</scope>
</reference>